<comment type="function">
    <text evidence="1 11">Histone methyltransferase that plays an essential role in early development and hematopoiesis (By similarity). Catalytic subunit of the MLL1/MLL complex, a multiprotein complex that mediates both methylation of 'Lys-4' of histone H3 (H3K4me) complex and acetylation of 'Lys-16' of histone H4 (H4K16ac) (By similarity). Catalyzes methyl group transfer from S-adenosyl-L-methionine to the epsilon-amino group of 'Lys-4' of histone H3 (H3K4) via a non-processive mechanism. Part of chromatin remodeling machinery predominantly forms H3K4me1 and H3K4me2 methylation marks at active chromatin sites where transcription and DNA repair take place (By similarity). Has weak methyltransferase activity by itself, and requires other component of the MLL1/MLL complex to obtain full methyltransferase activity (By similarity). Has no activity toward histone H3 phosphorylated on 'Thr-3', less activity toward H3 dimethylated on 'Arg-8' or 'Lys-9', while it has higher activity toward H3 acetylated on 'Lys-9' (By similarity). Binds to unmethylated CpG elements in the promoter of target genes and helps maintain them in the nonmethylated state (By similarity). Required for transcriptional activation of HOXA9 (By similarity). Promotes PPP1R15A-induced apoptosis (By similarity). Plays a critical role in the control of circadian gene expression and is essential for the transcriptional activation mediated by the CLOCK-BMAL1 heterodimer (PubMed:21113167). Establishes a permissive chromatin state for circadian transcription by mediating a rhythmic methylation of 'Lys-4' of histone H3 (H3K4me) and this histone modification directs the circadian acetylation at H3K9 and H3K14 allowing the recruitment of CLOCK-BMAL1 to chromatin (PubMed:21113167). Also has auto-methylation activity on Cys-3879 in absence of histone H3 substrate (By similarity).</text>
</comment>
<comment type="catalytic activity">
    <reaction evidence="1">
        <text>L-lysyl(4)-[histone H3] + S-adenosyl-L-methionine = N(6)-methyl-L-lysyl(4)-[histone H3] + S-adenosyl-L-homocysteine + H(+)</text>
        <dbReference type="Rhea" id="RHEA:60264"/>
        <dbReference type="Rhea" id="RHEA-COMP:15543"/>
        <dbReference type="Rhea" id="RHEA-COMP:15547"/>
        <dbReference type="ChEBI" id="CHEBI:15378"/>
        <dbReference type="ChEBI" id="CHEBI:29969"/>
        <dbReference type="ChEBI" id="CHEBI:57856"/>
        <dbReference type="ChEBI" id="CHEBI:59789"/>
        <dbReference type="ChEBI" id="CHEBI:61929"/>
        <dbReference type="EC" id="2.1.1.364"/>
    </reaction>
    <physiologicalReaction direction="left-to-right" evidence="1">
        <dbReference type="Rhea" id="RHEA:60265"/>
    </physiologicalReaction>
</comment>
<comment type="catalytic activity">
    <reaction evidence="1">
        <text>N(6)-methyl-L-lysyl(4)-[histone H3] + S-adenosyl-L-methionine = N(6),N(6)-dimethyl-L-lysyl(4)-[histone H3] + S-adenosyl-L-homocysteine + H(+)</text>
        <dbReference type="Rhea" id="RHEA:60268"/>
        <dbReference type="Rhea" id="RHEA-COMP:15540"/>
        <dbReference type="Rhea" id="RHEA-COMP:15543"/>
        <dbReference type="ChEBI" id="CHEBI:15378"/>
        <dbReference type="ChEBI" id="CHEBI:57856"/>
        <dbReference type="ChEBI" id="CHEBI:59789"/>
        <dbReference type="ChEBI" id="CHEBI:61929"/>
        <dbReference type="ChEBI" id="CHEBI:61976"/>
    </reaction>
    <physiologicalReaction direction="left-to-right" evidence="1">
        <dbReference type="Rhea" id="RHEA:60269"/>
    </physiologicalReaction>
</comment>
<comment type="catalytic activity">
    <reaction evidence="1">
        <text>L-cysteinyl-[protein] + S-adenosyl-L-methionine = S-methyl-L-cysteinyl-[protein] + S-adenosyl-L-homocysteine + H(+)</text>
        <dbReference type="Rhea" id="RHEA:66544"/>
        <dbReference type="Rhea" id="RHEA-COMP:10131"/>
        <dbReference type="Rhea" id="RHEA-COMP:10132"/>
        <dbReference type="ChEBI" id="CHEBI:15378"/>
        <dbReference type="ChEBI" id="CHEBI:29950"/>
        <dbReference type="ChEBI" id="CHEBI:57856"/>
        <dbReference type="ChEBI" id="CHEBI:59789"/>
        <dbReference type="ChEBI" id="CHEBI:82612"/>
    </reaction>
    <physiologicalReaction direction="left-to-right" evidence="1">
        <dbReference type="Rhea" id="RHEA:66545"/>
    </physiologicalReaction>
</comment>
<comment type="subunit">
    <text evidence="1 11 12">MLL cleavage product N320 heterodimerizes with MLL cleavage product C180 (via SET and FYRC domains). Component of some MLL1/MLL complex, at least composed of the core components KMT2A/MLL1, ASH2L, HCFC1/HCF1, HCFC2, WDR5, DPY30 and RBBP5, as well as the facultative components BACC1, CHD8, E2F6, HSP70, INO80C, KANSL1, LAS1L, MAX, MCRS1, MEN1, MGA, KAT8/MOF, PELP1, PHF20, PRP31, RING2, RUVB1/TIP49A, RUVB2/TIP49B, SENP3, TAF1, TAF4, TAF6, TAF7, TAF9 and TEX10. Interacts (via WIN motif) with WDR5; the interaction is direct. Interaction with WDR5 is required for stable interaction with ASH2L and RBBP5, and thereby also for optimal histone methyltransferase activity. Interacts with KAT8/MOF; the interaction is direct. Interacts with SBF1 and PPP1R15A. Interacts with ZNF335 (By similarity). Interacts with CLOCK and BMAL1 in a circadian manner (PubMed:21113167). Interacts with PPIE; this results in decreased histone H3 methyltransferase activity. Interacts with CREBBP (By similarity). Interacts with the WRAD complex composed of WDR5, RBBP5, ASH2L and DPY30 (By similarity). Interacts (via MBM motif) with MEN1 (By similarity). Interacts (via IBM motifs) with PSIP1 (via IBD domain) with moderate affinity whereas the KMT2A-MEN1 complex interacts with a greater affinity; MEN1 enhances interaction of KMT2A with PSIP1 (By similarity). Phosphorylation increases its affinity for PSIP1 (By similarity). Forms a complex with CREBBP and CREB1 (By similarity).</text>
</comment>
<comment type="subcellular location">
    <subcellularLocation>
        <location evidence="1">Nucleus</location>
    </subcellularLocation>
</comment>
<comment type="subcellular location">
    <molecule>MLL cleavage product N320</molecule>
    <subcellularLocation>
        <location evidence="1">Nucleus</location>
    </subcellularLocation>
</comment>
<comment type="subcellular location">
    <molecule>MLL cleavage product C180</molecule>
    <subcellularLocation>
        <location evidence="1">Nucleus</location>
    </subcellularLocation>
    <text evidence="1">Localizes to a diffuse nuclear pattern when not associated with MLL cleavage product N320.</text>
</comment>
<comment type="alternative products">
    <event type="alternative splicing"/>
    <isoform>
        <id>P55200-1</id>
        <name>1</name>
        <sequence type="displayed"/>
    </isoform>
    <isoform>
        <id>P55200-2</id>
        <name>2</name>
        <sequence type="described" ref="VSP_006667"/>
    </isoform>
</comment>
<comment type="domain">
    <text evidence="1">The 9aaTAD motif is a transactivation domain present in a large number of yeast and animal transcription factors.</text>
</comment>
<comment type="domain">
    <text evidence="1">The SET domain structure is atypical and is not in an optimal position to have methyltransferase activity. It requires other components of the MLL1/MLL complex, such as ASH2L or RBBP5, to order the active site and obtain optimal histone methyltransferase activity.</text>
</comment>
<comment type="domain">
    <text evidence="1">The CXXC-type zinc finger binds to DNA sequence elements containing unmethylated CpG dinucleotides.</text>
</comment>
<comment type="domain">
    <text evidence="1">The third PHD-type zinc-finger binds both trimethylated histone H3K4me3 and PPIE; histone and PPIE bind to distinct surfaces. Nevertheless, PPIE binding and histone binding are mutually inhibitory. Isomerization of a peptidylproline bond in the linker between the third PHD-type zinc-finger and the bromo domain disrupts the interaction between the bromo domain and the third PHD-type zinc-finger, and thereby facilitates interaction with PPIE.</text>
</comment>
<comment type="PTM">
    <text evidence="1">Proteolytic cleavage by TASP1 generates MLL cleavage 3product N320 and MLL cleavage product C180, which reassemble through a non-covalent association. 2 cleavage sites exist, cleavage site 1 (CS1) and cleavage site 2 (CS2), to generate MLL cleavage products N320 and C180. CS2 is the major site.</text>
</comment>
<comment type="PTM">
    <text evidence="1">Phosphorylation increases its interaction with PSIP1.</text>
</comment>
<comment type="PTM">
    <text evidence="1">Auto-methylated at Cys-3879: auto-methylation is inhibited by the WRAD complex and unmodified histone H3.</text>
</comment>
<comment type="similarity">
    <text evidence="5">Belongs to the class V-like SAM-binding methyltransferase superfamily. Histone-lysine methyltransferase family. TRX/MLL subfamily.</text>
</comment>
<comment type="sequence caution" evidence="14">
    <conflict type="erroneous initiation">
        <sequence resource="EMBL-CDS" id="BAE24386"/>
    </conflict>
    <text>Truncated N-terminus.</text>
</comment>
<keyword id="KW-0007">Acetylation</keyword>
<keyword id="KW-0025">Alternative splicing</keyword>
<keyword id="KW-0090">Biological rhythms</keyword>
<keyword id="KW-0103">Bromodomain</keyword>
<keyword id="KW-0156">Chromatin regulator</keyword>
<keyword id="KW-0238">DNA-binding</keyword>
<keyword id="KW-1017">Isopeptide bond</keyword>
<keyword id="KW-0479">Metal-binding</keyword>
<keyword id="KW-0488">Methylation</keyword>
<keyword id="KW-0489">Methyltransferase</keyword>
<keyword id="KW-0539">Nucleus</keyword>
<keyword id="KW-0597">Phosphoprotein</keyword>
<keyword id="KW-1185">Reference proteome</keyword>
<keyword id="KW-0677">Repeat</keyword>
<keyword id="KW-0949">S-adenosyl-L-methionine</keyword>
<keyword id="KW-0804">Transcription</keyword>
<keyword id="KW-0805">Transcription regulation</keyword>
<keyword id="KW-0808">Transferase</keyword>
<keyword id="KW-0832">Ubl conjugation</keyword>
<keyword id="KW-0862">Zinc</keyword>
<keyword id="KW-0863">Zinc-finger</keyword>
<reference key="1">
    <citation type="journal article" date="2009" name="PLoS Biol.">
        <title>Lineage-specific biology revealed by a finished genome assembly of the mouse.</title>
        <authorList>
            <person name="Church D.M."/>
            <person name="Goodstadt L."/>
            <person name="Hillier L.W."/>
            <person name="Zody M.C."/>
            <person name="Goldstein S."/>
            <person name="She X."/>
            <person name="Bult C.J."/>
            <person name="Agarwala R."/>
            <person name="Cherry J.L."/>
            <person name="DiCuccio M."/>
            <person name="Hlavina W."/>
            <person name="Kapustin Y."/>
            <person name="Meric P."/>
            <person name="Maglott D."/>
            <person name="Birtle Z."/>
            <person name="Marques A.C."/>
            <person name="Graves T."/>
            <person name="Zhou S."/>
            <person name="Teague B."/>
            <person name="Potamousis K."/>
            <person name="Churas C."/>
            <person name="Place M."/>
            <person name="Herschleb J."/>
            <person name="Runnheim R."/>
            <person name="Forrest D."/>
            <person name="Amos-Landgraf J."/>
            <person name="Schwartz D.C."/>
            <person name="Cheng Z."/>
            <person name="Lindblad-Toh K."/>
            <person name="Eichler E.E."/>
            <person name="Ponting C.P."/>
        </authorList>
    </citation>
    <scope>NUCLEOTIDE SEQUENCE [LARGE SCALE GENOMIC DNA]</scope>
    <source>
        <strain>C57BL/6J</strain>
    </source>
</reference>
<reference key="2">
    <citation type="journal article" date="1993" name="Proc. Natl. Acad. Sci. U.S.A.">
        <title>Analysis of the murine All-1 gene reveals conserved domains with human ALL-1 and identifies a motif shared with DNA methyltransferases.</title>
        <authorList>
            <person name="Ma Q."/>
            <person name="Alder H."/>
            <person name="Nelson K.K."/>
            <person name="Chatterjee D."/>
            <person name="Gu Y."/>
            <person name="Nakamura T."/>
            <person name="Canaani E."/>
            <person name="Croce C.M."/>
            <person name="Siracusa L.D."/>
            <person name="Buchberg A.M."/>
        </authorList>
    </citation>
    <scope>NUCLEOTIDE SEQUENCE [MRNA] OF 101-3966 (ISOFORMS 1 AND 2)</scope>
    <source>
        <strain>C57BL/6 X CBA</strain>
        <strain>C57BL/6J</strain>
        <tissue>Lung</tissue>
        <tissue>Spleen</tissue>
    </source>
</reference>
<reference key="3">
    <citation type="journal article" date="2005" name="Science">
        <title>The transcriptional landscape of the mammalian genome.</title>
        <authorList>
            <person name="Carninci P."/>
            <person name="Kasukawa T."/>
            <person name="Katayama S."/>
            <person name="Gough J."/>
            <person name="Frith M.C."/>
            <person name="Maeda N."/>
            <person name="Oyama R."/>
            <person name="Ravasi T."/>
            <person name="Lenhard B."/>
            <person name="Wells C."/>
            <person name="Kodzius R."/>
            <person name="Shimokawa K."/>
            <person name="Bajic V.B."/>
            <person name="Brenner S.E."/>
            <person name="Batalov S."/>
            <person name="Forrest A.R."/>
            <person name="Zavolan M."/>
            <person name="Davis M.J."/>
            <person name="Wilming L.G."/>
            <person name="Aidinis V."/>
            <person name="Allen J.E."/>
            <person name="Ambesi-Impiombato A."/>
            <person name="Apweiler R."/>
            <person name="Aturaliya R.N."/>
            <person name="Bailey T.L."/>
            <person name="Bansal M."/>
            <person name="Baxter L."/>
            <person name="Beisel K.W."/>
            <person name="Bersano T."/>
            <person name="Bono H."/>
            <person name="Chalk A.M."/>
            <person name="Chiu K.P."/>
            <person name="Choudhary V."/>
            <person name="Christoffels A."/>
            <person name="Clutterbuck D.R."/>
            <person name="Crowe M.L."/>
            <person name="Dalla E."/>
            <person name="Dalrymple B.P."/>
            <person name="de Bono B."/>
            <person name="Della Gatta G."/>
            <person name="di Bernardo D."/>
            <person name="Down T."/>
            <person name="Engstrom P."/>
            <person name="Fagiolini M."/>
            <person name="Faulkner G."/>
            <person name="Fletcher C.F."/>
            <person name="Fukushima T."/>
            <person name="Furuno M."/>
            <person name="Futaki S."/>
            <person name="Gariboldi M."/>
            <person name="Georgii-Hemming P."/>
            <person name="Gingeras T.R."/>
            <person name="Gojobori T."/>
            <person name="Green R.E."/>
            <person name="Gustincich S."/>
            <person name="Harbers M."/>
            <person name="Hayashi Y."/>
            <person name="Hensch T.K."/>
            <person name="Hirokawa N."/>
            <person name="Hill D."/>
            <person name="Huminiecki L."/>
            <person name="Iacono M."/>
            <person name="Ikeo K."/>
            <person name="Iwama A."/>
            <person name="Ishikawa T."/>
            <person name="Jakt M."/>
            <person name="Kanapin A."/>
            <person name="Katoh M."/>
            <person name="Kawasawa Y."/>
            <person name="Kelso J."/>
            <person name="Kitamura H."/>
            <person name="Kitano H."/>
            <person name="Kollias G."/>
            <person name="Krishnan S.P."/>
            <person name="Kruger A."/>
            <person name="Kummerfeld S.K."/>
            <person name="Kurochkin I.V."/>
            <person name="Lareau L.F."/>
            <person name="Lazarevic D."/>
            <person name="Lipovich L."/>
            <person name="Liu J."/>
            <person name="Liuni S."/>
            <person name="McWilliam S."/>
            <person name="Madan Babu M."/>
            <person name="Madera M."/>
            <person name="Marchionni L."/>
            <person name="Matsuda H."/>
            <person name="Matsuzawa S."/>
            <person name="Miki H."/>
            <person name="Mignone F."/>
            <person name="Miyake S."/>
            <person name="Morris K."/>
            <person name="Mottagui-Tabar S."/>
            <person name="Mulder N."/>
            <person name="Nakano N."/>
            <person name="Nakauchi H."/>
            <person name="Ng P."/>
            <person name="Nilsson R."/>
            <person name="Nishiguchi S."/>
            <person name="Nishikawa S."/>
            <person name="Nori F."/>
            <person name="Ohara O."/>
            <person name="Okazaki Y."/>
            <person name="Orlando V."/>
            <person name="Pang K.C."/>
            <person name="Pavan W.J."/>
            <person name="Pavesi G."/>
            <person name="Pesole G."/>
            <person name="Petrovsky N."/>
            <person name="Piazza S."/>
            <person name="Reed J."/>
            <person name="Reid J.F."/>
            <person name="Ring B.Z."/>
            <person name="Ringwald M."/>
            <person name="Rost B."/>
            <person name="Ruan Y."/>
            <person name="Salzberg S.L."/>
            <person name="Sandelin A."/>
            <person name="Schneider C."/>
            <person name="Schoenbach C."/>
            <person name="Sekiguchi K."/>
            <person name="Semple C.A."/>
            <person name="Seno S."/>
            <person name="Sessa L."/>
            <person name="Sheng Y."/>
            <person name="Shibata Y."/>
            <person name="Shimada H."/>
            <person name="Shimada K."/>
            <person name="Silva D."/>
            <person name="Sinclair B."/>
            <person name="Sperling S."/>
            <person name="Stupka E."/>
            <person name="Sugiura K."/>
            <person name="Sultana R."/>
            <person name="Takenaka Y."/>
            <person name="Taki K."/>
            <person name="Tammoja K."/>
            <person name="Tan S.L."/>
            <person name="Tang S."/>
            <person name="Taylor M.S."/>
            <person name="Tegner J."/>
            <person name="Teichmann S.A."/>
            <person name="Ueda H.R."/>
            <person name="van Nimwegen E."/>
            <person name="Verardo R."/>
            <person name="Wei C.L."/>
            <person name="Yagi K."/>
            <person name="Yamanishi H."/>
            <person name="Zabarovsky E."/>
            <person name="Zhu S."/>
            <person name="Zimmer A."/>
            <person name="Hide W."/>
            <person name="Bult C."/>
            <person name="Grimmond S.M."/>
            <person name="Teasdale R.D."/>
            <person name="Liu E.T."/>
            <person name="Brusic V."/>
            <person name="Quackenbush J."/>
            <person name="Wahlestedt C."/>
            <person name="Mattick J.S."/>
            <person name="Hume D.A."/>
            <person name="Kai C."/>
            <person name="Sasaki D."/>
            <person name="Tomaru Y."/>
            <person name="Fukuda S."/>
            <person name="Kanamori-Katayama M."/>
            <person name="Suzuki M."/>
            <person name="Aoki J."/>
            <person name="Arakawa T."/>
            <person name="Iida J."/>
            <person name="Imamura K."/>
            <person name="Itoh M."/>
            <person name="Kato T."/>
            <person name="Kawaji H."/>
            <person name="Kawagashira N."/>
            <person name="Kawashima T."/>
            <person name="Kojima M."/>
            <person name="Kondo S."/>
            <person name="Konno H."/>
            <person name="Nakano K."/>
            <person name="Ninomiya N."/>
            <person name="Nishio T."/>
            <person name="Okada M."/>
            <person name="Plessy C."/>
            <person name="Shibata K."/>
            <person name="Shiraki T."/>
            <person name="Suzuki S."/>
            <person name="Tagami M."/>
            <person name="Waki K."/>
            <person name="Watahiki A."/>
            <person name="Okamura-Oho Y."/>
            <person name="Suzuki H."/>
            <person name="Kawai J."/>
            <person name="Hayashizaki Y."/>
        </authorList>
    </citation>
    <scope>NUCLEOTIDE SEQUENCE [LARGE SCALE MRNA] OF 372-1517 (ISOFORM 1)</scope>
    <source>
        <strain>C57BL/6J</strain>
        <tissue>Medulla oblongata</tissue>
        <tissue>Retina</tissue>
    </source>
</reference>
<reference key="4">
    <citation type="journal article" date="2010" name="Cell">
        <title>A tissue-specific atlas of mouse protein phosphorylation and expression.</title>
        <authorList>
            <person name="Huttlin E.L."/>
            <person name="Jedrychowski M.P."/>
            <person name="Elias J.E."/>
            <person name="Goswami T."/>
            <person name="Rad R."/>
            <person name="Beausoleil S.A."/>
            <person name="Villen J."/>
            <person name="Haas W."/>
            <person name="Sowa M.E."/>
            <person name="Gygi S.P."/>
        </authorList>
    </citation>
    <scope>PHOSPHORYLATION [LARGE SCALE ANALYSIS] AT SER-151; SER-1053; SER-1839; THR-1847; SER-2100 AND SER-2560</scope>
    <scope>IDENTIFICATION BY MASS SPECTROMETRY [LARGE SCALE ANALYSIS]</scope>
    <source>
        <tissue>Brain</tissue>
        <tissue>Kidney</tissue>
        <tissue>Liver</tissue>
        <tissue>Lung</tissue>
        <tissue>Pancreas</tissue>
        <tissue>Spleen</tissue>
        <tissue>Testis</tissue>
    </source>
</reference>
<reference key="5">
    <citation type="journal article" date="2010" name="Nat. Struct. Mol. Biol.">
        <title>The histone methyltransferase MLL1 permits the oscillation of circadian gene expression.</title>
        <authorList>
            <person name="Katada S."/>
            <person name="Sassone-Corsi P."/>
        </authorList>
    </citation>
    <scope>FUNCTION</scope>
    <scope>INTERACTION WITH CLOCK AND BMAL1</scope>
</reference>
<reference key="6">
    <citation type="journal article" date="2011" name="Cell">
        <title>Role for Dpy-30 in ES cell-fate specification by regulation of H3K4 methylation within bivalent domains.</title>
        <authorList>
            <person name="Jiang H."/>
            <person name="Shukla A."/>
            <person name="Wang X."/>
            <person name="Chen W.Y."/>
            <person name="Bernstein B.E."/>
            <person name="Roeder R.G."/>
        </authorList>
    </citation>
    <scope>IDENTIFICATION IN MLL COMPLEX</scope>
    <scope>INTERACTION WITH ASH2L; DPY30; KMT2D; RRBP5 AND WDR5</scope>
</reference>
<reference key="7">
    <citation type="journal article" date="2013" name="Mol. Cell">
        <title>SIRT5-mediated lysine desuccinylation impacts diverse metabolic pathways.</title>
        <authorList>
            <person name="Park J."/>
            <person name="Chen Y."/>
            <person name="Tishkoff D.X."/>
            <person name="Peng C."/>
            <person name="Tan M."/>
            <person name="Dai L."/>
            <person name="Xie Z."/>
            <person name="Zhang Y."/>
            <person name="Zwaans B.M."/>
            <person name="Skinner M.E."/>
            <person name="Lombard D.B."/>
            <person name="Zhao Y."/>
        </authorList>
    </citation>
    <scope>ACETYLATION [LARGE SCALE ANALYSIS] AT LYS-237; LYS-371; LYS-2954 AND LYS-3459</scope>
    <scope>IDENTIFICATION BY MASS SPECTROMETRY [LARGE SCALE ANALYSIS]</scope>
    <source>
        <tissue>Embryonic fibroblast</tissue>
    </source>
</reference>
<sequence>MAHSCRWRFPARPGTTGGGGGGGRRGLGGAPRQRVPALLLPPGPQAGGGGPGAPPSPPAVAAAAAGSSGAGVPGGAAAASAASSSSASSSSSSSSSASSGPALLRVGPGFDAALQVSAAIGTNLRRFRAVFGESGGGGGSGEDEQFLGFGSDEEVRVRSPTRSPSVKASPRKPRGRPRSGSDRNPAILSDPSVFSPLNKSETKSADKIKKKDSKSIEKKRGRPPTFPGVKIKITHGKDIAELTQGSKEDSLKKVKRTPSAMFQQATKIKKLRAGKLSPLKSKFKTGKLQIGRKGVQIVRRRGRPPSTERIKTPSGLLINSELEKPQKVRKDKEGTPPLTKEDKTVVRQSPRRIKPVRIIPSCKRTDATIAKQLLQRAKKGAQKKIEKEAAQLQGRKVKTQVKNIRQFIMPVVSAISSRIIKTPRRFIEDEDYDPPMKIARLESTPNSRFSATSCGSSEKSSAASQHSSQMSSDSSRSSSPSIDTTSDSQASEEIQALPEERSNTPEVHTPLPISQSPENESNDRRSRRYSMSERSFGSRATKKLPTLQSAPQQQTSSSPPPPLLTPPPPLQPASGISDHTPWLMPPTIPLASPFLPASAAPMQGKRKSILREPTFRWTSLKHSRSEPQYFSSAKYAKEGLIRKPIFDNFRPPPLTPEDVGFASGFSASGTAASARLFSPLHSGTRFDIHKRSPILRAPRFTPSEAHSRIFESVTLPSNRTSSGASSSGVSNRKRKRKVFSPIRSEPRSPSHSMRTRSGRLSTSELSPLTPPSSVSSSLSIPVSPLAASALNPTFTFPSHSLTQSGESTEKNQRARKQTSALAEPFSSNSPALFPWFTPGSQTEKGRKKDTAPEELSKDRDADKSVEKDKSRERDREREKENKRESRKEKRKKGSDIQSSSALYPVGRVSKEKVAGEDVGTSSSAKKATGRKKSSSLDSGADVAPVTLGDTTAVKAKILIKKGRGNLEKNNLDLGPAAPSLEKERTPCLSAPSSSTVKHSTSSIGSMLAQADKLPMTDKRVASLLKKAKAQLCKIEKSKSLKQTDQPKAQGQESDSSETSVRGPRIKHVCRRAAVALGRKRAVFPDDMPTLSALPWEEREKILSSMGNDDKSSVAGSEDAEPLAPPIKPIKPVTRNKAPQEPPVKKGRRSRRCGQCPGCQVPEDCGICTNCLDKPKFGGRNIKKQCCKMRKCQNLQWMPSKASLQKQTKAVKKKEKKSKTTEKKESKESTAVKSPLEPAQKAAPPPREEPAPKKSSSEPPPRKPVEEKSEEGGAPAPAPAPEPKQVSAPASRKSSKQVSQPAAVVPPQPPSTAPQKKEAPKAVPSEPKKKQPPPPEPGPEQSKQKKVAPRPSIPVKQKPKDKEKPPPVSKQENAGTLNILNPLSNGISSKQKIPADGVHRIRVDFKEDCEAENVWEMGGLGILTSVPITPRVVCFLCASSGHVEFVYCQVCCEPFHKFCLEENERPLEDQLENWCCRRCKFCHVCGRQHQATKQLLECNKCRNSYHPECLGPNYPTKPTKKKKVWICTKCVRCKSCGSTTPGKGWDAQWSHDFSLCHDCAKLFAKGNFCPLCDKCYDDDDYESKMMQCGKCDRWVHSKCESLSGTEDEMYEILSNLPESVAYTCVNCTERHPAEWRLALEKELQASLKQVLTALLNSRTTSHLLRYRQAAKPPDLNPETEESIPSRSSPEGPDPPVLTEVSKQDEQQPLDLEGVKKRMDQGSYVSVLEFSDDIVKIIQAAINSDGGQPEIKKANSMVKSFFIRQMERVFPWFSVKKSRFWEPNKVSNNSGMLPNAVLPPSLDHNYAQWQEREESSHTEQPPLMKKIIPAPKPKGPGEPDSPTPLHPPTPPILSTDRSREDSPELNPPPGIDDNRQCALCLMYGDDSANDAGRLLYIGQNEWTHVNCALWSAEVFEDDDGSLKNVHMAVIRGKQLRCEFCQKPGATVGCCLTSCTSNYHFMCSRAKNCVFLDDKKVYCQRHRDLIKGEVVPENGFEVFRRVFVDFEGISLRRKFLNGLEPENIHMMIGSMTIDCLGILNDLSDCEDKLFPIGYQCSRVYWSTTDARKRCVYTCKIMECRPPVVEPDINSTVEHDDNRTIAHSPSSFIDASCKDSQSTAAILSPPSPDRPHSQTSGSCYYHVISKVPRIRTPSYSPTQRSPGCRPLPSAGSPTPTTHEIVTVGDPLLSSGLRSIGSRRHSTSSLSPLRSKLRIMSPVRTGSAYSRSSVSSVPSLGTATDPEASAKASDRGGLLSSSANLGHSAPPSSSSQRTVGGSKTSHLDGSSPSEVKRCSASDLVPKGSLVKGEKNRTSSSKSTDGSAHSTAYPGIPKLTPQVHNATPGELNISKIGSFAEPSTVPFSSKDTVSYPQLHLRGQRSDRDQHMDPSQSVKPSPNEDGEIKTLKLPGMGHRPSILHEHIGSSSRDRRQKGKKSSKETCKEKHSSKSYLEPGQVTTGEEGNLKPEFADEVLTPGFLGQRPCNNVSSEKIGDKVLPLSGVPKGQSTQVEGSSKELQAPRKCSVKVTPLKMEGENQSKNTQKESGPGSPAHIESVCPAEPVSASRSPGAGPGVQPSPNNTLSQDPQSNNYQNLPEQDRNLMIPDGPKPQEDGSFKRRYPRRSARARSNMFFGLTPLYGVRSYGEEDIPFYSNSTGKKRGKRSAEGQVDGADDLSTSDEDDLYYYNFTRTVISSGGEERLASHNLFREEEQCDLPKISQLDGVDDGTESDTSVTATSRKSSQIPKRNGKENGTENLKIDRPEDAGEKEHVIKSAVGHKNEPKLDNCHSVSRVKAQGQDSLEAQLSSLESSRRVHTSTPSDKNLLDTYNAELLKSDSDNNNSDDCGNILPSDIMDFVLKNTPSMQALGESPESSSSELLTLGEGLGLDSNREKDIGLFEVFSQQLPATEPVDSSVSSSISAEEQFELPLELPSDLSVLTTRSPTVPSQNPSRLAVISDSGEKRVTITEKSVASSEGDPALLSPGVDPAPEGHMTPDHFIQGHMDADHISSPPCGSVEQGHGNSQDLTRNSGTPGLQVPVSPTVPVQNQKYVPSSTDSPGPSQISNAAVQTTPPHLKPATEKLIVVNQNMQPLYVLQTLPNGVTQKIQLTSPVSSTPSVMETNTSVLGPMGSGLTLTTGLNPSLPPSPSLFPPASKGLLSVPHHQHLHSFPAAAQSSFPPNISSPPSGLLIGVQPPPDPQLLGSEANQRTDLTTTVATPSSGLKKRPISRLHTRKNKKLAPSSAPSNIAPSDVVSNMTLINFTPSQLSNHPSLLDLGSLNPSSHRTVPNIIKRSKSGIMYFEQAPLLPPQSVGGTAATAAGSSTISQDTSHLTSGPVSALASGSSVLNVVSMQTTAAPTSSTSVPGHVTLANQRLLGTPDIGSISHLLIKASHQSLGIQDQPVALPPSSGMFPQLGTSQTPSAAAMTAASSICVLPSSQTAGMTAASPPGEAEEHYKLQRGNQLLAGKTGTLTSQRDRDPDSAPGTQPSNFTQTAEAPNGVRLEQNKTLPSAKPASSASPGSSPSSGQQSGSSSVPGPTKPKPKAKRIQLPLDKGSGKKHKVSHLRTSSEAHIPHRDTDPAPQPSVTRTPRANREQQDAAGVEQPSQKECGQPAGPVAALPEVQATQNPANEQENAEPKAMEEEESGFSSPLMLWLQQEQKRKESITERKPKKGLVFEISSDDGFQICAESIEDAWKSLTDKVQEARSNARLKQLSFAGVNGLRMLGILHDAVVFLIEQLAGAKHCRNYKFRFHKPEEANEPPLNPHGSARAEVHLRQSAFDMFNFLASKHRQPPEYNPNDEEEEEVQLKSARRATSMDLPMPMRFRHLKKTSKEAVGVYRSPIHGRGLFCKRNIDAGEMVIEYAGNVIRSIQTDKREKYYDSKGIGCYMFRIDDSEVVDATMHGNAARFINHSCEPNCYSRVINIDGQKHIVIFAMRKIYRGEELTYDYKFPIEDASNKLPCNCGAKKCRKFLN</sequence>
<proteinExistence type="evidence at protein level"/>
<dbReference type="EC" id="2.1.1.364" evidence="1"/>
<dbReference type="EC" id="2.1.1.-" evidence="1"/>
<dbReference type="EMBL" id="AC061963">
    <property type="status" value="NOT_ANNOTATED_CDS"/>
    <property type="molecule type" value="Genomic_DNA"/>
</dbReference>
<dbReference type="EMBL" id="AC142113">
    <property type="status" value="NOT_ANNOTATED_CDS"/>
    <property type="molecule type" value="Genomic_DNA"/>
</dbReference>
<dbReference type="EMBL" id="L17069">
    <property type="protein sequence ID" value="AAA62593.1"/>
    <property type="molecule type" value="mRNA"/>
</dbReference>
<dbReference type="EMBL" id="AK140439">
    <property type="protein sequence ID" value="BAE24386.1"/>
    <property type="status" value="ALT_INIT"/>
    <property type="molecule type" value="mRNA"/>
</dbReference>
<dbReference type="EMBL" id="AK149341">
    <property type="protein sequence ID" value="BAE28820.1"/>
    <property type="molecule type" value="mRNA"/>
</dbReference>
<dbReference type="RefSeq" id="NP_001074518.1">
    <property type="nucleotide sequence ID" value="NM_001081049.1"/>
</dbReference>
<dbReference type="BMRB" id="P55200"/>
<dbReference type="SMR" id="P55200"/>
<dbReference type="BioGRID" id="229502">
    <property type="interactions" value="34"/>
</dbReference>
<dbReference type="DIP" id="DIP-58597N"/>
<dbReference type="FunCoup" id="P55200">
    <property type="interactions" value="4428"/>
</dbReference>
<dbReference type="IntAct" id="P55200">
    <property type="interactions" value="3"/>
</dbReference>
<dbReference type="STRING" id="10090.ENSMUSP00000002095"/>
<dbReference type="GlyGen" id="P55200">
    <property type="glycosylation" value="9 sites, 2 N-linked glycans (3 sites), 1 O-linked glycan (1 site)"/>
</dbReference>
<dbReference type="iPTMnet" id="P55200"/>
<dbReference type="PhosphoSitePlus" id="P55200"/>
<dbReference type="jPOST" id="P55200"/>
<dbReference type="PaxDb" id="10090-ENSMUSP00000110337"/>
<dbReference type="PeptideAtlas" id="P55200"/>
<dbReference type="ProteomicsDB" id="263666">
    <molecule id="P55200-1"/>
</dbReference>
<dbReference type="ProteomicsDB" id="263667">
    <molecule id="P55200-2"/>
</dbReference>
<dbReference type="Pumba" id="P55200"/>
<dbReference type="Ensembl" id="ENSMUST00000002095.11">
    <molecule id="P55200-2"/>
    <property type="protein sequence ID" value="ENSMUSP00000002095.4"/>
    <property type="gene ID" value="ENSMUSG00000002028.14"/>
</dbReference>
<dbReference type="Ensembl" id="ENSMUST00000114689.8">
    <molecule id="P55200-1"/>
    <property type="protein sequence ID" value="ENSMUSP00000110337.2"/>
    <property type="gene ID" value="ENSMUSG00000002028.14"/>
</dbReference>
<dbReference type="UCSC" id="uc009pep.1">
    <molecule id="P55200-2"/>
    <property type="organism name" value="mouse"/>
</dbReference>
<dbReference type="UCSC" id="uc009peq.1">
    <molecule id="P55200-1"/>
    <property type="organism name" value="mouse"/>
</dbReference>
<dbReference type="AGR" id="MGI:96995"/>
<dbReference type="MGI" id="MGI:96995">
    <property type="gene designation" value="Kmt2a"/>
</dbReference>
<dbReference type="VEuPathDB" id="HostDB:ENSMUSG00000002028"/>
<dbReference type="eggNOG" id="KOG1084">
    <property type="taxonomic scope" value="Eukaryota"/>
</dbReference>
<dbReference type="GeneTree" id="ENSGT00940000160099"/>
<dbReference type="HOGENOM" id="CLU_000208_2_0_1"/>
<dbReference type="InParanoid" id="P55200"/>
<dbReference type="OMA" id="VVRSQQW"/>
<dbReference type="OrthoDB" id="308383at2759"/>
<dbReference type="PhylomeDB" id="P55200"/>
<dbReference type="TreeFam" id="TF319820"/>
<dbReference type="Reactome" id="R-MMU-3214841">
    <property type="pathway name" value="PKMTs methylate histone lysines"/>
</dbReference>
<dbReference type="Reactome" id="R-MMU-8936459">
    <property type="pathway name" value="RUNX1 regulates genes involved in megakaryocyte differentiation and platelet function"/>
</dbReference>
<dbReference type="Reactome" id="R-MMU-8939236">
    <property type="pathway name" value="RUNX1 regulates transcription of genes involved in differentiation of HSCs"/>
</dbReference>
<dbReference type="Reactome" id="R-MMU-9772755">
    <property type="pathway name" value="Formation of WDR5-containing histone-modifying complexes"/>
</dbReference>
<dbReference type="BioGRID-ORCS" id="214162">
    <property type="hits" value="15 hits in 81 CRISPR screens"/>
</dbReference>
<dbReference type="ChiTaRS" id="Kmt2a">
    <property type="organism name" value="mouse"/>
</dbReference>
<dbReference type="PRO" id="PR:P55200"/>
<dbReference type="Proteomes" id="UP000000589">
    <property type="component" value="Chromosome 9"/>
</dbReference>
<dbReference type="RNAct" id="P55200">
    <property type="molecule type" value="protein"/>
</dbReference>
<dbReference type="Bgee" id="ENSMUSG00000002028">
    <property type="expression patterns" value="Expressed in embryonic post-anal tail and 252 other cell types or tissues"/>
</dbReference>
<dbReference type="ExpressionAtlas" id="P55200">
    <property type="expression patterns" value="baseline and differential"/>
</dbReference>
<dbReference type="GO" id="GO:0005829">
    <property type="term" value="C:cytosol"/>
    <property type="evidence" value="ECO:0007669"/>
    <property type="project" value="Ensembl"/>
</dbReference>
<dbReference type="GO" id="GO:0035097">
    <property type="term" value="C:histone methyltransferase complex"/>
    <property type="evidence" value="ECO:0000250"/>
    <property type="project" value="UniProtKB"/>
</dbReference>
<dbReference type="GO" id="GO:0071339">
    <property type="term" value="C:MLL1 complex"/>
    <property type="evidence" value="ECO:0000250"/>
    <property type="project" value="UniProtKB"/>
</dbReference>
<dbReference type="GO" id="GO:0005634">
    <property type="term" value="C:nucleus"/>
    <property type="evidence" value="ECO:0000314"/>
    <property type="project" value="MGI"/>
</dbReference>
<dbReference type="GO" id="GO:0003682">
    <property type="term" value="F:chromatin binding"/>
    <property type="evidence" value="ECO:0000314"/>
    <property type="project" value="MGI"/>
</dbReference>
<dbReference type="GO" id="GO:0003677">
    <property type="term" value="F:DNA binding"/>
    <property type="evidence" value="ECO:0000314"/>
    <property type="project" value="MGI"/>
</dbReference>
<dbReference type="GO" id="GO:0042800">
    <property type="term" value="F:histone H3K4 methyltransferase activity"/>
    <property type="evidence" value="ECO:0000314"/>
    <property type="project" value="CACAO"/>
</dbReference>
<dbReference type="GO" id="GO:0140945">
    <property type="term" value="F:histone H3K4 monomethyltransferase activity"/>
    <property type="evidence" value="ECO:0007669"/>
    <property type="project" value="RHEA"/>
</dbReference>
<dbReference type="GO" id="GO:0140999">
    <property type="term" value="F:histone H3K4 trimethyltransferase activity"/>
    <property type="evidence" value="ECO:0007669"/>
    <property type="project" value="UniProtKB-EC"/>
</dbReference>
<dbReference type="GO" id="GO:0042803">
    <property type="term" value="F:protein homodimerization activity"/>
    <property type="evidence" value="ECO:0007669"/>
    <property type="project" value="Ensembl"/>
</dbReference>
<dbReference type="GO" id="GO:0106363">
    <property type="term" value="F:protein-cysteine methyltransferase activity"/>
    <property type="evidence" value="ECO:0000250"/>
    <property type="project" value="UniProtKB"/>
</dbReference>
<dbReference type="GO" id="GO:0045322">
    <property type="term" value="F:unmethylated CpG binding"/>
    <property type="evidence" value="ECO:0000250"/>
    <property type="project" value="UniProtKB"/>
</dbReference>
<dbReference type="GO" id="GO:0008270">
    <property type="term" value="F:zinc ion binding"/>
    <property type="evidence" value="ECO:0000250"/>
    <property type="project" value="UniProtKB"/>
</dbReference>
<dbReference type="GO" id="GO:0009952">
    <property type="term" value="P:anterior/posterior pattern specification"/>
    <property type="evidence" value="ECO:0000315"/>
    <property type="project" value="MGI"/>
</dbReference>
<dbReference type="GO" id="GO:0071560">
    <property type="term" value="P:cellular response to transforming growth factor beta stimulus"/>
    <property type="evidence" value="ECO:0007669"/>
    <property type="project" value="Ensembl"/>
</dbReference>
<dbReference type="GO" id="GO:0032922">
    <property type="term" value="P:circadian regulation of gene expression"/>
    <property type="evidence" value="ECO:0000315"/>
    <property type="project" value="UniProtKB"/>
</dbReference>
<dbReference type="GO" id="GO:0050890">
    <property type="term" value="P:cognition"/>
    <property type="evidence" value="ECO:0000315"/>
    <property type="project" value="MGI"/>
</dbReference>
<dbReference type="GO" id="GO:0060216">
    <property type="term" value="P:definitive hemopoiesis"/>
    <property type="evidence" value="ECO:0000315"/>
    <property type="project" value="CACAO"/>
</dbReference>
<dbReference type="GO" id="GO:0035162">
    <property type="term" value="P:embryonic hemopoiesis"/>
    <property type="evidence" value="ECO:0000315"/>
    <property type="project" value="MGI"/>
</dbReference>
<dbReference type="GO" id="GO:0040029">
    <property type="term" value="P:epigenetic regulation of gene expression"/>
    <property type="evidence" value="ECO:0000315"/>
    <property type="project" value="MGI"/>
</dbReference>
<dbReference type="GO" id="GO:0035640">
    <property type="term" value="P:exploration behavior"/>
    <property type="evidence" value="ECO:0000315"/>
    <property type="project" value="MGI"/>
</dbReference>
<dbReference type="GO" id="GO:0048144">
    <property type="term" value="P:fibroblast proliferation"/>
    <property type="evidence" value="ECO:0000315"/>
    <property type="project" value="MGI"/>
</dbReference>
<dbReference type="GO" id="GO:0048873">
    <property type="term" value="P:homeostasis of number of cells within a tissue"/>
    <property type="evidence" value="ECO:0000316"/>
    <property type="project" value="MGI"/>
</dbReference>
<dbReference type="GO" id="GO:0051899">
    <property type="term" value="P:membrane depolarization"/>
    <property type="evidence" value="ECO:0007669"/>
    <property type="project" value="Ensembl"/>
</dbReference>
<dbReference type="GO" id="GO:0032259">
    <property type="term" value="P:methylation"/>
    <property type="evidence" value="ECO:0007669"/>
    <property type="project" value="UniProtKB-KW"/>
</dbReference>
<dbReference type="GO" id="GO:0090310">
    <property type="term" value="P:negative regulation of DNA methylation-dependent heterochromatin formation"/>
    <property type="evidence" value="ECO:0007669"/>
    <property type="project" value="Ensembl"/>
</dbReference>
<dbReference type="GO" id="GO:0048147">
    <property type="term" value="P:negative regulation of fibroblast proliferation"/>
    <property type="evidence" value="ECO:0000315"/>
    <property type="project" value="MGI"/>
</dbReference>
<dbReference type="GO" id="GO:0045893">
    <property type="term" value="P:positive regulation of DNA-templated transcription"/>
    <property type="evidence" value="ECO:0000314"/>
    <property type="project" value="UniProtKB"/>
</dbReference>
<dbReference type="GO" id="GO:0045944">
    <property type="term" value="P:positive regulation of transcription by RNA polymerase II"/>
    <property type="evidence" value="ECO:0000315"/>
    <property type="project" value="CACAO"/>
</dbReference>
<dbReference type="GO" id="GO:0009791">
    <property type="term" value="P:post-embryonic development"/>
    <property type="evidence" value="ECO:0000316"/>
    <property type="project" value="MGI"/>
</dbReference>
<dbReference type="GO" id="GO:0036211">
    <property type="term" value="P:protein modification process"/>
    <property type="evidence" value="ECO:0007669"/>
    <property type="project" value="Ensembl"/>
</dbReference>
<dbReference type="GO" id="GO:0065003">
    <property type="term" value="P:protein-containing complex assembly"/>
    <property type="evidence" value="ECO:0007669"/>
    <property type="project" value="Ensembl"/>
</dbReference>
<dbReference type="GO" id="GO:0010468">
    <property type="term" value="P:regulation of gene expression"/>
    <property type="evidence" value="ECO:0000315"/>
    <property type="project" value="MGI"/>
</dbReference>
<dbReference type="GO" id="GO:0048172">
    <property type="term" value="P:regulation of short-term neuronal synaptic plasticity"/>
    <property type="evidence" value="ECO:0000315"/>
    <property type="project" value="MGI"/>
</dbReference>
<dbReference type="GO" id="GO:0009416">
    <property type="term" value="P:response to light stimulus"/>
    <property type="evidence" value="ECO:0000315"/>
    <property type="project" value="MGI"/>
</dbReference>
<dbReference type="GO" id="GO:0035864">
    <property type="term" value="P:response to potassium ion"/>
    <property type="evidence" value="ECO:0007669"/>
    <property type="project" value="Ensembl"/>
</dbReference>
<dbReference type="GO" id="GO:0048536">
    <property type="term" value="P:spleen development"/>
    <property type="evidence" value="ECO:0000316"/>
    <property type="project" value="MGI"/>
</dbReference>
<dbReference type="GO" id="GO:0045064">
    <property type="term" value="P:T-helper 2 cell differentiation"/>
    <property type="evidence" value="ECO:0007669"/>
    <property type="project" value="Ensembl"/>
</dbReference>
<dbReference type="GO" id="GO:0045815">
    <property type="term" value="P:transcription initiation-coupled chromatin remodeling"/>
    <property type="evidence" value="ECO:0000250"/>
    <property type="project" value="UniProtKB"/>
</dbReference>
<dbReference type="GO" id="GO:0008542">
    <property type="term" value="P:visual learning"/>
    <property type="evidence" value="ECO:0000315"/>
    <property type="project" value="MGI"/>
</dbReference>
<dbReference type="CDD" id="cd05493">
    <property type="entry name" value="Bromo_ALL-1"/>
    <property type="match status" value="1"/>
</dbReference>
<dbReference type="CDD" id="cd15693">
    <property type="entry name" value="ePHD_KMT2A"/>
    <property type="match status" value="1"/>
</dbReference>
<dbReference type="CDD" id="cd15588">
    <property type="entry name" value="PHD1_KMT2A"/>
    <property type="match status" value="1"/>
</dbReference>
<dbReference type="CDD" id="cd15590">
    <property type="entry name" value="PHD2_KMT2A"/>
    <property type="match status" value="1"/>
</dbReference>
<dbReference type="CDD" id="cd15592">
    <property type="entry name" value="PHD3_KMT2A"/>
    <property type="match status" value="1"/>
</dbReference>
<dbReference type="CDD" id="cd19170">
    <property type="entry name" value="SET_KMT2A_2B"/>
    <property type="match status" value="1"/>
</dbReference>
<dbReference type="FunFam" id="3.30.160.360:FF:000002">
    <property type="entry name" value="Histone-lysine N-methyltransferase"/>
    <property type="match status" value="1"/>
</dbReference>
<dbReference type="FunFam" id="3.30.160.360:FF:000003">
    <property type="entry name" value="Histone-lysine N-methyltransferase"/>
    <property type="match status" value="1"/>
</dbReference>
<dbReference type="FunFam" id="3.30.40.10:FF:000002">
    <property type="entry name" value="Histone-lysine N-methyltransferase"/>
    <property type="match status" value="1"/>
</dbReference>
<dbReference type="FunFam" id="3.30.40.10:FF:000071">
    <property type="entry name" value="Histone-lysine N-methyltransferase"/>
    <property type="match status" value="1"/>
</dbReference>
<dbReference type="FunFam" id="3.30.40.10:FF:000089">
    <property type="entry name" value="Histone-lysine N-methyltransferase"/>
    <property type="match status" value="1"/>
</dbReference>
<dbReference type="FunFam" id="2.170.270.10:FF:000149">
    <property type="entry name" value="Myeloid/lymphoid or mixed-lineage leukemia"/>
    <property type="match status" value="1"/>
</dbReference>
<dbReference type="Gene3D" id="3.30.160.360">
    <property type="match status" value="2"/>
</dbReference>
<dbReference type="Gene3D" id="6.10.250.2390">
    <property type="match status" value="1"/>
</dbReference>
<dbReference type="Gene3D" id="1.20.920.10">
    <property type="entry name" value="Bromodomain-like"/>
    <property type="match status" value="1"/>
</dbReference>
<dbReference type="Gene3D" id="2.170.270.10">
    <property type="entry name" value="SET domain"/>
    <property type="match status" value="1"/>
</dbReference>
<dbReference type="Gene3D" id="3.30.40.10">
    <property type="entry name" value="Zinc/RING finger domain, C3HC4 (zinc finger)"/>
    <property type="match status" value="3"/>
</dbReference>
<dbReference type="InterPro" id="IPR001487">
    <property type="entry name" value="Bromodomain"/>
</dbReference>
<dbReference type="InterPro" id="IPR036427">
    <property type="entry name" value="Bromodomain-like_sf"/>
</dbReference>
<dbReference type="InterPro" id="IPR034732">
    <property type="entry name" value="EPHD"/>
</dbReference>
<dbReference type="InterPro" id="IPR003889">
    <property type="entry name" value="FYrich_C"/>
</dbReference>
<dbReference type="InterPro" id="IPR003888">
    <property type="entry name" value="FYrich_N"/>
</dbReference>
<dbReference type="InterPro" id="IPR047219">
    <property type="entry name" value="KMT2A_2B_SET"/>
</dbReference>
<dbReference type="InterPro" id="IPR041958">
    <property type="entry name" value="KMT2A_ePHD"/>
</dbReference>
<dbReference type="InterPro" id="IPR042023">
    <property type="entry name" value="KMT2A_PHD1"/>
</dbReference>
<dbReference type="InterPro" id="IPR042025">
    <property type="entry name" value="KMT2A_PHD2"/>
</dbReference>
<dbReference type="InterPro" id="IPR044133">
    <property type="entry name" value="KMT2A_PHD3"/>
</dbReference>
<dbReference type="InterPro" id="IPR016569">
    <property type="entry name" value="MeTrfase_trithorax"/>
</dbReference>
<dbReference type="InterPro" id="IPR003616">
    <property type="entry name" value="Post-SET_dom"/>
</dbReference>
<dbReference type="InterPro" id="IPR001214">
    <property type="entry name" value="SET_dom"/>
</dbReference>
<dbReference type="InterPro" id="IPR046341">
    <property type="entry name" value="SET_dom_sf"/>
</dbReference>
<dbReference type="InterPro" id="IPR002857">
    <property type="entry name" value="Znf_CXXC"/>
</dbReference>
<dbReference type="InterPro" id="IPR011011">
    <property type="entry name" value="Znf_FYVE_PHD"/>
</dbReference>
<dbReference type="InterPro" id="IPR001965">
    <property type="entry name" value="Znf_PHD"/>
</dbReference>
<dbReference type="InterPro" id="IPR019787">
    <property type="entry name" value="Znf_PHD-finger"/>
</dbReference>
<dbReference type="InterPro" id="IPR013083">
    <property type="entry name" value="Znf_RING/FYVE/PHD"/>
</dbReference>
<dbReference type="PANTHER" id="PTHR45838:SF2">
    <property type="entry name" value="HISTONE-LYSINE N-METHYLTRANSFERASE 2A"/>
    <property type="match status" value="1"/>
</dbReference>
<dbReference type="PANTHER" id="PTHR45838">
    <property type="entry name" value="HISTONE-LYSINE-N-METHYLTRANSFERASE 2 KMT2 FAMILY MEMBER"/>
    <property type="match status" value="1"/>
</dbReference>
<dbReference type="Pfam" id="PF05965">
    <property type="entry name" value="FYRC"/>
    <property type="match status" value="1"/>
</dbReference>
<dbReference type="Pfam" id="PF05964">
    <property type="entry name" value="FYRN"/>
    <property type="match status" value="1"/>
</dbReference>
<dbReference type="Pfam" id="PF00628">
    <property type="entry name" value="PHD"/>
    <property type="match status" value="1"/>
</dbReference>
<dbReference type="Pfam" id="PF00856">
    <property type="entry name" value="SET"/>
    <property type="match status" value="1"/>
</dbReference>
<dbReference type="Pfam" id="PF02008">
    <property type="entry name" value="zf-CXXC"/>
    <property type="match status" value="1"/>
</dbReference>
<dbReference type="Pfam" id="PF13771">
    <property type="entry name" value="zf-HC5HC2H"/>
    <property type="match status" value="1"/>
</dbReference>
<dbReference type="PIRSF" id="PIRSF010354">
    <property type="entry name" value="Methyltransferase_trithorax"/>
    <property type="match status" value="1"/>
</dbReference>
<dbReference type="SMART" id="SM00297">
    <property type="entry name" value="BROMO"/>
    <property type="match status" value="1"/>
</dbReference>
<dbReference type="SMART" id="SM00542">
    <property type="entry name" value="FYRC"/>
    <property type="match status" value="1"/>
</dbReference>
<dbReference type="SMART" id="SM00541">
    <property type="entry name" value="FYRN"/>
    <property type="match status" value="1"/>
</dbReference>
<dbReference type="SMART" id="SM00249">
    <property type="entry name" value="PHD"/>
    <property type="match status" value="4"/>
</dbReference>
<dbReference type="SMART" id="SM00508">
    <property type="entry name" value="PostSET"/>
    <property type="match status" value="1"/>
</dbReference>
<dbReference type="SMART" id="SM00317">
    <property type="entry name" value="SET"/>
    <property type="match status" value="1"/>
</dbReference>
<dbReference type="SUPFAM" id="SSF47370">
    <property type="entry name" value="Bromodomain"/>
    <property type="match status" value="1"/>
</dbReference>
<dbReference type="SUPFAM" id="SSF57903">
    <property type="entry name" value="FYVE/PHD zinc finger"/>
    <property type="match status" value="2"/>
</dbReference>
<dbReference type="SUPFAM" id="SSF82199">
    <property type="entry name" value="SET domain"/>
    <property type="match status" value="1"/>
</dbReference>
<dbReference type="PROSITE" id="PS50014">
    <property type="entry name" value="BROMODOMAIN_2"/>
    <property type="match status" value="1"/>
</dbReference>
<dbReference type="PROSITE" id="PS51805">
    <property type="entry name" value="EPHD"/>
    <property type="match status" value="1"/>
</dbReference>
<dbReference type="PROSITE" id="PS51543">
    <property type="entry name" value="FYRC"/>
    <property type="match status" value="1"/>
</dbReference>
<dbReference type="PROSITE" id="PS51542">
    <property type="entry name" value="FYRN"/>
    <property type="match status" value="1"/>
</dbReference>
<dbReference type="PROSITE" id="PS50868">
    <property type="entry name" value="POST_SET"/>
    <property type="match status" value="1"/>
</dbReference>
<dbReference type="PROSITE" id="PS50280">
    <property type="entry name" value="SET"/>
    <property type="match status" value="1"/>
</dbReference>
<dbReference type="PROSITE" id="PS51058">
    <property type="entry name" value="ZF_CXXC"/>
    <property type="match status" value="1"/>
</dbReference>
<dbReference type="PROSITE" id="PS01359">
    <property type="entry name" value="ZF_PHD_1"/>
    <property type="match status" value="3"/>
</dbReference>
<dbReference type="PROSITE" id="PS50016">
    <property type="entry name" value="ZF_PHD_2"/>
    <property type="match status" value="3"/>
</dbReference>
<name>KMT2A_MOUSE</name>
<evidence type="ECO:0000250" key="1">
    <source>
        <dbReference type="UniProtKB" id="Q03164"/>
    </source>
</evidence>
<evidence type="ECO:0000255" key="2">
    <source>
        <dbReference type="PROSITE-ProRule" id="PRU00035"/>
    </source>
</evidence>
<evidence type="ECO:0000255" key="3">
    <source>
        <dbReference type="PROSITE-ProRule" id="PRU00146"/>
    </source>
</evidence>
<evidence type="ECO:0000255" key="4">
    <source>
        <dbReference type="PROSITE-ProRule" id="PRU00155"/>
    </source>
</evidence>
<evidence type="ECO:0000255" key="5">
    <source>
        <dbReference type="PROSITE-ProRule" id="PRU00190"/>
    </source>
</evidence>
<evidence type="ECO:0000255" key="6">
    <source>
        <dbReference type="PROSITE-ProRule" id="PRU00509"/>
    </source>
</evidence>
<evidence type="ECO:0000255" key="7">
    <source>
        <dbReference type="PROSITE-ProRule" id="PRU00875"/>
    </source>
</evidence>
<evidence type="ECO:0000255" key="8">
    <source>
        <dbReference type="PROSITE-ProRule" id="PRU00876"/>
    </source>
</evidence>
<evidence type="ECO:0000255" key="9">
    <source>
        <dbReference type="PROSITE-ProRule" id="PRU01146"/>
    </source>
</evidence>
<evidence type="ECO:0000256" key="10">
    <source>
        <dbReference type="SAM" id="MobiDB-lite"/>
    </source>
</evidence>
<evidence type="ECO:0000269" key="11">
    <source>
    </source>
</evidence>
<evidence type="ECO:0000269" key="12">
    <source>
    </source>
</evidence>
<evidence type="ECO:0000303" key="13">
    <source>
    </source>
</evidence>
<evidence type="ECO:0000305" key="14"/>
<evidence type="ECO:0007744" key="15">
    <source>
    </source>
</evidence>
<evidence type="ECO:0007744" key="16">
    <source>
    </source>
</evidence>
<organism>
    <name type="scientific">Mus musculus</name>
    <name type="common">Mouse</name>
    <dbReference type="NCBI Taxonomy" id="10090"/>
    <lineage>
        <taxon>Eukaryota</taxon>
        <taxon>Metazoa</taxon>
        <taxon>Chordata</taxon>
        <taxon>Craniata</taxon>
        <taxon>Vertebrata</taxon>
        <taxon>Euteleostomi</taxon>
        <taxon>Mammalia</taxon>
        <taxon>Eutheria</taxon>
        <taxon>Euarchontoglires</taxon>
        <taxon>Glires</taxon>
        <taxon>Rodentia</taxon>
        <taxon>Myomorpha</taxon>
        <taxon>Muroidea</taxon>
        <taxon>Muridae</taxon>
        <taxon>Murinae</taxon>
        <taxon>Mus</taxon>
        <taxon>Mus</taxon>
    </lineage>
</organism>
<accession>P55200</accession>
<accession>E9QNE7</accession>
<accession>Q3UEU1</accession>
<accession>Q3USE7</accession>
<feature type="chain" id="PRO_0000124877" description="Histone-lysine N-methyltransferase 2A">
    <location>
        <begin position="1"/>
        <end position="3966"/>
    </location>
</feature>
<feature type="chain" id="PRO_0000390951" description="MLL cleavage product N320" evidence="1">
    <location>
        <begin position="1"/>
        <end position="2714"/>
    </location>
</feature>
<feature type="chain" id="PRO_0000390952" description="MLL cleavage product C180" evidence="1">
    <location>
        <begin position="2715"/>
        <end position="3966"/>
    </location>
</feature>
<feature type="domain" description="Bromo" evidence="2">
    <location>
        <begin position="1637"/>
        <end position="1767"/>
    </location>
</feature>
<feature type="domain" description="FYR N-terminal" evidence="7">
    <location>
        <begin position="2020"/>
        <end position="2076"/>
    </location>
</feature>
<feature type="domain" description="FYR C-terminal" evidence="8">
    <location>
        <begin position="3663"/>
        <end position="3744"/>
    </location>
</feature>
<feature type="domain" description="SET" evidence="5">
    <location>
        <begin position="3826"/>
        <end position="3942"/>
    </location>
</feature>
<feature type="domain" description="Post-SET" evidence="4">
    <location>
        <begin position="3950"/>
        <end position="3966"/>
    </location>
</feature>
<feature type="DNA-binding region" description="A.T hook 1">
    <location>
        <begin position="167"/>
        <end position="178"/>
    </location>
</feature>
<feature type="DNA-binding region" description="A.T hook 2">
    <location>
        <begin position="215"/>
        <end position="225"/>
    </location>
</feature>
<feature type="DNA-binding region" description="A.T hook 3">
    <location>
        <begin position="299"/>
        <end position="307"/>
    </location>
</feature>
<feature type="zinc finger region" description="CXXC-type" evidence="6">
    <location>
        <begin position="1144"/>
        <end position="1192"/>
    </location>
</feature>
<feature type="zinc finger region" description="PHD-type 1" evidence="3">
    <location>
        <begin position="1430"/>
        <end position="1481"/>
    </location>
</feature>
<feature type="zinc finger region" description="PHD-type 2" evidence="3">
    <location>
        <begin position="1478"/>
        <end position="1532"/>
    </location>
</feature>
<feature type="zinc finger region" description="PHD-type 3" evidence="3">
    <location>
        <begin position="1565"/>
        <end position="1629"/>
    </location>
</feature>
<feature type="zinc finger region" description="C2HC pre-PHD-type" evidence="9">
    <location>
        <begin position="1872"/>
        <end position="1912"/>
    </location>
</feature>
<feature type="zinc finger region" description="PHD-type 4" evidence="9">
    <location>
        <begin position="1933"/>
        <end position="1980"/>
    </location>
</feature>
<feature type="region of interest" description="Disordered" evidence="10">
    <location>
        <begin position="1"/>
        <end position="106"/>
    </location>
</feature>
<feature type="region of interest" description="Disordered" evidence="10">
    <location>
        <begin position="130"/>
        <end position="231"/>
    </location>
</feature>
<feature type="region of interest" description="Disordered" evidence="10">
    <location>
        <begin position="322"/>
        <end position="343"/>
    </location>
</feature>
<feature type="region of interest" description="Disordered" evidence="10">
    <location>
        <begin position="440"/>
        <end position="590"/>
    </location>
</feature>
<feature type="region of interest" description="Disordered" evidence="10">
    <location>
        <begin position="711"/>
        <end position="943"/>
    </location>
</feature>
<feature type="region of interest" description="Disordered" evidence="10">
    <location>
        <begin position="963"/>
        <end position="1003"/>
    </location>
</feature>
<feature type="region of interest" description="Disordered" evidence="10">
    <location>
        <begin position="1034"/>
        <end position="1064"/>
    </location>
</feature>
<feature type="region of interest" description="Disordered" evidence="10">
    <location>
        <begin position="1101"/>
        <end position="1161"/>
    </location>
</feature>
<feature type="region of interest" description="Disordered" evidence="10">
    <location>
        <begin position="1196"/>
        <end position="1390"/>
    </location>
</feature>
<feature type="region of interest" description="Interaction with histone H3K4me3" evidence="1">
    <location>
        <begin position="1583"/>
        <end position="1599"/>
    </location>
</feature>
<feature type="region of interest" description="Disordered" evidence="10">
    <location>
        <begin position="1665"/>
        <end position="1714"/>
    </location>
</feature>
<feature type="region of interest" description="Disordered" evidence="10">
    <location>
        <begin position="1807"/>
        <end position="1870"/>
    </location>
</feature>
<feature type="region of interest" description="Disordered" evidence="10">
    <location>
        <begin position="2147"/>
        <end position="2174"/>
    </location>
</feature>
<feature type="region of interest" description="Disordered" evidence="10">
    <location>
        <begin position="2214"/>
        <end position="2339"/>
    </location>
</feature>
<feature type="region of interest" description="Disordered" evidence="10">
    <location>
        <begin position="2371"/>
        <end position="2619"/>
    </location>
</feature>
<feature type="region of interest" description="Disordered" evidence="10">
    <location>
        <begin position="2639"/>
        <end position="2673"/>
    </location>
</feature>
<feature type="region of interest" description="Disordered" evidence="10">
    <location>
        <begin position="2709"/>
        <end position="2759"/>
    </location>
</feature>
<feature type="region of interest" description="Disordered" evidence="10">
    <location>
        <begin position="2958"/>
        <end position="3060"/>
    </location>
</feature>
<feature type="region of interest" description="Disordered" evidence="10">
    <location>
        <begin position="3164"/>
        <end position="3239"/>
    </location>
</feature>
<feature type="region of interest" description="Disordered" evidence="10">
    <location>
        <begin position="3462"/>
        <end position="3640"/>
    </location>
</feature>
<feature type="region of interest" description="Disordered" evidence="10">
    <location>
        <begin position="3782"/>
        <end position="3805"/>
    </location>
</feature>
<feature type="short sequence motif" description="Menin-binding motif (MBM)" evidence="1">
    <location>
        <begin position="6"/>
        <end position="25"/>
    </location>
</feature>
<feature type="short sequence motif" description="Integrase domain-binding motif 1 (IBM1)" evidence="1">
    <location>
        <begin position="121"/>
        <end position="132"/>
    </location>
</feature>
<feature type="short sequence motif" description="Integrase domain-binding motif 2 (IBM2)" evidence="1">
    <location>
        <begin position="145"/>
        <end position="150"/>
    </location>
</feature>
<feature type="short sequence motif" description="9aaTAD" evidence="1">
    <location>
        <begin position="2843"/>
        <end position="2851"/>
    </location>
</feature>
<feature type="short sequence motif" description="WDR5 interaction motif (WIN)" evidence="1">
    <location>
        <begin position="3759"/>
        <end position="3764"/>
    </location>
</feature>
<feature type="compositionally biased region" description="Gly residues" evidence="10">
    <location>
        <begin position="15"/>
        <end position="29"/>
    </location>
</feature>
<feature type="compositionally biased region" description="Low complexity" evidence="10">
    <location>
        <begin position="75"/>
        <end position="102"/>
    </location>
</feature>
<feature type="compositionally biased region" description="Basic and acidic residues" evidence="10">
    <location>
        <begin position="200"/>
        <end position="218"/>
    </location>
</feature>
<feature type="compositionally biased region" description="Low complexity" evidence="10">
    <location>
        <begin position="450"/>
        <end position="489"/>
    </location>
</feature>
<feature type="compositionally biased region" description="Low complexity" evidence="10">
    <location>
        <begin position="544"/>
        <end position="557"/>
    </location>
</feature>
<feature type="compositionally biased region" description="Pro residues" evidence="10">
    <location>
        <begin position="558"/>
        <end position="571"/>
    </location>
</feature>
<feature type="compositionally biased region" description="Low complexity" evidence="10">
    <location>
        <begin position="717"/>
        <end position="730"/>
    </location>
</feature>
<feature type="compositionally biased region" description="Low complexity" evidence="10">
    <location>
        <begin position="760"/>
        <end position="790"/>
    </location>
</feature>
<feature type="compositionally biased region" description="Polar residues" evidence="10">
    <location>
        <begin position="791"/>
        <end position="806"/>
    </location>
</feature>
<feature type="compositionally biased region" description="Polar residues" evidence="10">
    <location>
        <begin position="817"/>
        <end position="830"/>
    </location>
</feature>
<feature type="compositionally biased region" description="Basic and acidic residues" evidence="10">
    <location>
        <begin position="843"/>
        <end position="887"/>
    </location>
</feature>
<feature type="compositionally biased region" description="Low complexity" evidence="10">
    <location>
        <begin position="989"/>
        <end position="1003"/>
    </location>
</feature>
<feature type="compositionally biased region" description="Polar residues" evidence="10">
    <location>
        <begin position="1040"/>
        <end position="1059"/>
    </location>
</feature>
<feature type="compositionally biased region" description="Basic and acidic residues" evidence="10">
    <location>
        <begin position="1101"/>
        <end position="1111"/>
    </location>
</feature>
<feature type="compositionally biased region" description="Basic and acidic residues" evidence="10">
    <location>
        <begin position="1217"/>
        <end position="1229"/>
    </location>
</feature>
<feature type="compositionally biased region" description="Low complexity" evidence="10">
    <location>
        <begin position="1230"/>
        <end position="1241"/>
    </location>
</feature>
<feature type="compositionally biased region" description="Basic and acidic residues" evidence="10">
    <location>
        <begin position="1245"/>
        <end position="1270"/>
    </location>
</feature>
<feature type="compositionally biased region" description="Polar residues" evidence="10">
    <location>
        <begin position="1369"/>
        <end position="1390"/>
    </location>
</feature>
<feature type="compositionally biased region" description="Pro residues" evidence="10">
    <location>
        <begin position="1828"/>
        <end position="1849"/>
    </location>
</feature>
<feature type="compositionally biased region" description="Low complexity" evidence="10">
    <location>
        <begin position="2218"/>
        <end position="2230"/>
    </location>
</feature>
<feature type="compositionally biased region" description="Polar residues" evidence="10">
    <location>
        <begin position="2250"/>
        <end position="2284"/>
    </location>
</feature>
<feature type="compositionally biased region" description="Polar residues" evidence="10">
    <location>
        <begin position="2308"/>
        <end position="2320"/>
    </location>
</feature>
<feature type="compositionally biased region" description="Basic and acidic residues" evidence="10">
    <location>
        <begin position="2411"/>
        <end position="2422"/>
    </location>
</feature>
<feature type="compositionally biased region" description="Basic and acidic residues" evidence="10">
    <location>
        <begin position="2430"/>
        <end position="2440"/>
    </location>
</feature>
<feature type="compositionally biased region" description="Polar residues" evidence="10">
    <location>
        <begin position="2498"/>
        <end position="2509"/>
    </location>
</feature>
<feature type="compositionally biased region" description="Polar residues" evidence="10">
    <location>
        <begin position="2528"/>
        <end position="2537"/>
    </location>
</feature>
<feature type="compositionally biased region" description="Polar residues" evidence="10">
    <location>
        <begin position="2569"/>
        <end position="2588"/>
    </location>
</feature>
<feature type="compositionally biased region" description="Basic residues" evidence="10">
    <location>
        <begin position="2609"/>
        <end position="2618"/>
    </location>
</feature>
<feature type="compositionally biased region" description="Acidic residues" evidence="10">
    <location>
        <begin position="2663"/>
        <end position="2673"/>
    </location>
</feature>
<feature type="compositionally biased region" description="Polar residues" evidence="10">
    <location>
        <begin position="2722"/>
        <end position="2737"/>
    </location>
</feature>
<feature type="compositionally biased region" description="Basic and acidic residues" evidence="10">
    <location>
        <begin position="2740"/>
        <end position="2759"/>
    </location>
</feature>
<feature type="compositionally biased region" description="Polar residues" evidence="10">
    <location>
        <begin position="3012"/>
        <end position="3025"/>
    </location>
</feature>
<feature type="compositionally biased region" description="Polar residues" evidence="10">
    <location>
        <begin position="3035"/>
        <end position="3060"/>
    </location>
</feature>
<feature type="compositionally biased region" description="Low complexity" evidence="10">
    <location>
        <begin position="3167"/>
        <end position="3178"/>
    </location>
</feature>
<feature type="compositionally biased region" description="Polar residues" evidence="10">
    <location>
        <begin position="3196"/>
        <end position="3212"/>
    </location>
</feature>
<feature type="compositionally biased region" description="Basic residues" evidence="10">
    <location>
        <begin position="3214"/>
        <end position="3229"/>
    </location>
</feature>
<feature type="compositionally biased region" description="Polar residues" evidence="10">
    <location>
        <begin position="3475"/>
        <end position="3487"/>
    </location>
</feature>
<feature type="compositionally biased region" description="Low complexity" evidence="10">
    <location>
        <begin position="3501"/>
        <end position="3528"/>
    </location>
</feature>
<feature type="compositionally biased region" description="Basic and acidic residues" evidence="10">
    <location>
        <begin position="3558"/>
        <end position="3570"/>
    </location>
</feature>
<feature type="binding site" evidence="6">
    <location>
        <position position="1152"/>
    </location>
    <ligand>
        <name>Zn(2+)</name>
        <dbReference type="ChEBI" id="CHEBI:29105"/>
        <label>1</label>
    </ligand>
</feature>
<feature type="binding site" evidence="6">
    <location>
        <position position="1155"/>
    </location>
    <ligand>
        <name>Zn(2+)</name>
        <dbReference type="ChEBI" id="CHEBI:29105"/>
        <label>1</label>
    </ligand>
</feature>
<feature type="binding site" evidence="6">
    <location>
        <position position="1158"/>
    </location>
    <ligand>
        <name>Zn(2+)</name>
        <dbReference type="ChEBI" id="CHEBI:29105"/>
        <label>1</label>
    </ligand>
</feature>
<feature type="binding site" evidence="6">
    <location>
        <position position="1164"/>
    </location>
    <ligand>
        <name>Zn(2+)</name>
        <dbReference type="ChEBI" id="CHEBI:29105"/>
        <label>2</label>
    </ligand>
</feature>
<feature type="binding site" evidence="6">
    <location>
        <position position="1167"/>
    </location>
    <ligand>
        <name>Zn(2+)</name>
        <dbReference type="ChEBI" id="CHEBI:29105"/>
        <label>2</label>
    </ligand>
</feature>
<feature type="binding site" evidence="6">
    <location>
        <position position="1170"/>
    </location>
    <ligand>
        <name>Zn(2+)</name>
        <dbReference type="ChEBI" id="CHEBI:29105"/>
        <label>2</label>
    </ligand>
</feature>
<feature type="binding site" evidence="6">
    <location>
        <position position="1186"/>
    </location>
    <ligand>
        <name>Zn(2+)</name>
        <dbReference type="ChEBI" id="CHEBI:29105"/>
        <label>2</label>
    </ligand>
</feature>
<feature type="binding site" evidence="6">
    <location>
        <position position="1191"/>
    </location>
    <ligand>
        <name>Zn(2+)</name>
        <dbReference type="ChEBI" id="CHEBI:29105"/>
        <label>1</label>
    </ligand>
</feature>
<feature type="binding site" evidence="5">
    <location>
        <position position="3836"/>
    </location>
    <ligand>
        <name>S-adenosyl-L-methionine</name>
        <dbReference type="ChEBI" id="CHEBI:59789"/>
    </ligand>
</feature>
<feature type="binding site" evidence="5">
    <location>
        <position position="3838"/>
    </location>
    <ligand>
        <name>S-adenosyl-L-methionine</name>
        <dbReference type="ChEBI" id="CHEBI:59789"/>
    </ligand>
</feature>
<feature type="binding site" evidence="5">
    <location>
        <position position="3880"/>
    </location>
    <ligand>
        <name>S-adenosyl-L-methionine</name>
        <dbReference type="ChEBI" id="CHEBI:59789"/>
    </ligand>
</feature>
<feature type="binding site" evidence="1">
    <location>
        <begin position="3903"/>
        <end position="3904"/>
    </location>
    <ligand>
        <name>S-adenosyl-L-methionine</name>
        <dbReference type="ChEBI" id="CHEBI:59789"/>
    </ligand>
</feature>
<feature type="binding site" evidence="1">
    <location>
        <position position="3906"/>
    </location>
    <ligand>
        <name>Zn(2+)</name>
        <dbReference type="ChEBI" id="CHEBI:29105"/>
    </ligand>
</feature>
<feature type="binding site" evidence="1">
    <location>
        <position position="3954"/>
    </location>
    <ligand>
        <name>Zn(2+)</name>
        <dbReference type="ChEBI" id="CHEBI:29105"/>
    </ligand>
</feature>
<feature type="binding site" evidence="5">
    <location>
        <position position="3955"/>
    </location>
    <ligand>
        <name>S-adenosyl-L-methionine</name>
        <dbReference type="ChEBI" id="CHEBI:59789"/>
    </ligand>
</feature>
<feature type="binding site" evidence="1">
    <location>
        <position position="3956"/>
    </location>
    <ligand>
        <name>Zn(2+)</name>
        <dbReference type="ChEBI" id="CHEBI:29105"/>
    </ligand>
</feature>
<feature type="binding site" evidence="1">
    <location>
        <position position="3961"/>
    </location>
    <ligand>
        <name>Zn(2+)</name>
        <dbReference type="ChEBI" id="CHEBI:29105"/>
    </ligand>
</feature>
<feature type="site" description="Cleavage; by TASP1, site 1" evidence="1">
    <location>
        <begin position="2662"/>
        <end position="2663"/>
    </location>
</feature>
<feature type="site" description="Cleavage; by TASP1, site 2" evidence="1">
    <location>
        <begin position="2714"/>
        <end position="2715"/>
    </location>
</feature>
<feature type="site" description="Important for WDR5-recognition and binding" evidence="1">
    <location>
        <position position="3762"/>
    </location>
</feature>
<feature type="modified residue" description="Phosphoserine; by CK2" evidence="1">
    <location>
        <position position="134"/>
    </location>
</feature>
<feature type="modified residue" description="Phosphoserine; by CK2" evidence="1">
    <location>
        <position position="140"/>
    </location>
</feature>
<feature type="modified residue" description="Phosphoserine" evidence="15">
    <location>
        <position position="151"/>
    </location>
</feature>
<feature type="modified residue" description="Phosphoserine" evidence="1">
    <location>
        <position position="195"/>
    </location>
</feature>
<feature type="modified residue" description="N6-acetyllysine" evidence="16">
    <location>
        <position position="237"/>
    </location>
</feature>
<feature type="modified residue" description="N6-acetyllysine" evidence="16">
    <location>
        <position position="371"/>
    </location>
</feature>
<feature type="modified residue" description="Phosphoserine" evidence="1">
    <location>
        <position position="516"/>
    </location>
</feature>
<feature type="modified residue" description="N6-acetyllysine" evidence="1">
    <location>
        <position position="634"/>
    </location>
</feature>
<feature type="modified residue" description="Phosphoserine" evidence="1">
    <location>
        <position position="678"/>
    </location>
</feature>
<feature type="modified residue" description="Phosphothreonine" evidence="1">
    <location>
        <position position="837"/>
    </location>
</feature>
<feature type="modified residue" description="Phosphoserine" evidence="1">
    <location>
        <position position="923"/>
    </location>
</feature>
<feature type="modified residue" description="Phosphoserine" evidence="15">
    <location>
        <position position="1053"/>
    </location>
</feature>
<feature type="modified residue" description="N6-acetyllysine" evidence="1">
    <location>
        <position position="1127"/>
    </location>
</feature>
<feature type="modified residue" description="N6-acetyllysine" evidence="1">
    <location>
        <position position="1232"/>
    </location>
</feature>
<feature type="modified residue" description="Phosphoserine" evidence="15">
    <location>
        <position position="1839"/>
    </location>
</feature>
<feature type="modified residue" description="Phosphothreonine" evidence="15">
    <location>
        <position position="1847"/>
    </location>
</feature>
<feature type="modified residue" description="Phosphoserine" evidence="1">
    <location>
        <position position="1860"/>
    </location>
</feature>
<feature type="modified residue" description="Phosphoserine" evidence="15">
    <location>
        <position position="2100"/>
    </location>
</feature>
<feature type="modified residue" description="Phosphothreonine" evidence="1">
    <location>
        <position position="2148"/>
    </location>
</feature>
<feature type="modified residue" description="Phosphoserine" evidence="1">
    <location>
        <position position="2152"/>
    </location>
</feature>
<feature type="modified residue" description="Phosphoserine" evidence="1">
    <location>
        <position position="2202"/>
    </location>
</feature>
<feature type="modified residue" description="Phosphoserine" evidence="15">
    <location>
        <position position="2560"/>
    </location>
</feature>
<feature type="modified residue" description="Phosphoserine" evidence="1">
    <location>
        <position position="2607"/>
    </location>
</feature>
<feature type="modified residue" description="Phosphoserine" evidence="1">
    <location>
        <position position="2792"/>
    </location>
</feature>
<feature type="modified residue" description="Phosphoserine" evidence="1">
    <location>
        <position position="2951"/>
    </location>
</feature>
<feature type="modified residue" description="N6-acetyllysine" evidence="16">
    <location>
        <position position="2954"/>
    </location>
</feature>
<feature type="modified residue" description="Phosphoserine" evidence="1">
    <location>
        <position position="3032"/>
    </location>
</feature>
<feature type="modified residue" description="Phosphothreonine" evidence="1">
    <location>
        <position position="3369"/>
    </location>
</feature>
<feature type="modified residue" description="N6-acetyllysine" evidence="16">
    <location>
        <position position="3459"/>
    </location>
</feature>
<feature type="modified residue" description="Phosphoserine" evidence="1">
    <location>
        <position position="3510"/>
    </location>
</feature>
<feature type="modified residue" description="Phosphoserine" evidence="1">
    <location>
        <position position="3523"/>
    </location>
</feature>
<feature type="modified residue" description="S-methylcysteine; by autocatalysis" evidence="1">
    <location>
        <position position="3879"/>
    </location>
</feature>
<feature type="cross-link" description="Glycyl lysine isopeptide (Lys-Gly) (interchain with G-Cter in SUMO2)" evidence="1">
    <location>
        <position position="2524"/>
    </location>
</feature>
<feature type="splice variant" id="VSP_006667" description="In isoform 2." evidence="13">
    <location>
        <begin position="1603"/>
        <end position="1605"/>
    </location>
</feature>
<feature type="sequence variant">
    <original>K</original>
    <variation>T</variation>
    <location>
        <position position="1597"/>
    </location>
</feature>
<feature type="sequence conflict" description="In Ref. 3; BAE28820." evidence="14" ref="3">
    <original>Q</original>
    <variation>E</variation>
    <location>
        <position position="372"/>
    </location>
</feature>
<feature type="sequence conflict" description="In Ref. 2; AAA62593." evidence="14" ref="2">
    <original>Q</original>
    <variation>K</variation>
    <location>
        <position position="554"/>
    </location>
</feature>
<feature type="sequence conflict" description="In Ref. 2; AAA62593." evidence="14" ref="2">
    <original>L</original>
    <variation>F</variation>
    <location>
        <position position="564"/>
    </location>
</feature>
<feature type="sequence conflict" description="In Ref. 3; BAE28820." evidence="14" ref="3">
    <original>P</original>
    <variation>S</variation>
    <location>
        <position position="797"/>
    </location>
</feature>
<feature type="sequence conflict" description="In Ref. 2; AAA62593 and 3; BAE28820." evidence="14" ref="2 3">
    <original>E</original>
    <variation>D</variation>
    <location>
        <position position="806"/>
    </location>
</feature>
<feature type="sequence conflict" description="In Ref. 2; AAA62593 and 3; BAE28820." evidence="14" ref="2 3">
    <original>L</original>
    <variation>P</variation>
    <location>
        <position position="821"/>
    </location>
</feature>
<feature type="sequence conflict" description="In Ref. 2; AAA62593." evidence="14" ref="2">
    <original>C</original>
    <variation>Y</variation>
    <location>
        <position position="1069"/>
    </location>
</feature>
<feature type="sequence conflict" description="In Ref. 2; AAA62593." evidence="14" ref="2">
    <original>A</original>
    <variation>S</variation>
    <location>
        <position position="1230"/>
    </location>
</feature>
<feature type="sequence conflict" description="In Ref. 2; AAA62593." evidence="14" ref="2">
    <original>R</original>
    <variation>L</variation>
    <location>
        <position position="1349"/>
    </location>
</feature>
<feature type="sequence conflict" description="In Ref. 2; AAA62593." evidence="14" ref="2">
    <original>A</original>
    <variation>S</variation>
    <location>
        <position position="1437"/>
    </location>
</feature>
<feature type="sequence conflict" description="In Ref. 2; AAA62593." evidence="14" ref="2">
    <original>G</original>
    <variation>E</variation>
    <location>
        <position position="1440"/>
    </location>
</feature>
<feature type="sequence conflict" description="In Ref. 2; AAA62593." evidence="14" ref="2">
    <original>A</original>
    <variation>P</variation>
    <location>
        <position position="1632"/>
    </location>
</feature>
<feature type="sequence conflict" description="In Ref. 2; AAA62593." evidence="14" ref="2">
    <original>S</original>
    <variation>L</variation>
    <location>
        <position position="2292"/>
    </location>
</feature>
<feature type="sequence conflict" description="In Ref. 2; AAA62593." evidence="14" ref="2">
    <original>N</original>
    <variation>I</variation>
    <location>
        <position position="3481"/>
    </location>
</feature>
<feature type="sequence conflict" description="In Ref. 2; AAA62593." evidence="14" ref="2">
    <original>R</original>
    <variation>S</variation>
    <location>
        <position position="3493"/>
    </location>
</feature>
<feature type="sequence conflict" description="In Ref. 2; AAA62593." evidence="14" ref="2">
    <original>G</original>
    <variation>V</variation>
    <location>
        <position position="3548"/>
    </location>
</feature>
<feature type="sequence conflict" description="In Ref. 2; AAA62593." evidence="14" ref="2">
    <original>Q</original>
    <variation>K</variation>
    <location>
        <position position="3769"/>
    </location>
</feature>
<gene>
    <name type="primary">Kmt2a</name>
    <name type="synonym">All1</name>
    <name type="synonym">Hrx</name>
    <name type="synonym">Mll</name>
    <name type="synonym">Mll1</name>
</gene>
<protein>
    <recommendedName>
        <fullName>Histone-lysine N-methyltransferase 2A</fullName>
        <shortName>Lysine N-methyltransferase 2A</shortName>
        <ecNumber evidence="1">2.1.1.364</ecNumber>
    </recommendedName>
    <alternativeName>
        <fullName>ALL-1</fullName>
    </alternativeName>
    <alternativeName>
        <fullName evidence="14">Cysteine methyltransferase KMT2A</fullName>
        <ecNumber evidence="1">2.1.1.-</ecNumber>
    </alternativeName>
    <alternativeName>
        <fullName>Myeloid/lymphoid or mixed-lineage leukemia</fullName>
    </alternativeName>
    <alternativeName>
        <fullName>Myeloid/lymphoid or mixed-lineage leukemia protein 1</fullName>
    </alternativeName>
    <alternativeName>
        <fullName>Zinc finger protein HRX</fullName>
    </alternativeName>
    <component>
        <recommendedName>
            <fullName>MLL cleavage product N320</fullName>
        </recommendedName>
        <alternativeName>
            <fullName>N-terminal cleavage product of 320 kDa</fullName>
            <shortName>p320</shortName>
        </alternativeName>
    </component>
    <component>
        <recommendedName>
            <fullName>MLL cleavage product C180</fullName>
        </recommendedName>
        <alternativeName>
            <fullName>C-terminal cleavage product of 180 kDa</fullName>
            <shortName>p180</shortName>
        </alternativeName>
    </component>
</protein>